<feature type="chain" id="PRO_1000186051" description="Fatty acid oxidation complex subunit alpha">
    <location>
        <begin position="1"/>
        <end position="725"/>
    </location>
</feature>
<feature type="region of interest" description="Enoyl-CoA hydratase/isomerase" evidence="1">
    <location>
        <begin position="1"/>
        <end position="189"/>
    </location>
</feature>
<feature type="region of interest" description="3-hydroxyacyl-CoA dehydrogenase" evidence="1">
    <location>
        <begin position="311"/>
        <end position="725"/>
    </location>
</feature>
<feature type="active site" description="For 3-hydroxyacyl-CoA dehydrogenase activity" evidence="1">
    <location>
        <position position="450"/>
    </location>
</feature>
<feature type="binding site" evidence="1">
    <location>
        <position position="296"/>
    </location>
    <ligand>
        <name>substrate</name>
    </ligand>
</feature>
<feature type="binding site" evidence="1">
    <location>
        <position position="324"/>
    </location>
    <ligand>
        <name>NAD(+)</name>
        <dbReference type="ChEBI" id="CHEBI:57540"/>
    </ligand>
</feature>
<feature type="binding site" evidence="1">
    <location>
        <position position="343"/>
    </location>
    <ligand>
        <name>NAD(+)</name>
        <dbReference type="ChEBI" id="CHEBI:57540"/>
    </ligand>
</feature>
<feature type="binding site" evidence="1">
    <location>
        <begin position="400"/>
        <end position="402"/>
    </location>
    <ligand>
        <name>NAD(+)</name>
        <dbReference type="ChEBI" id="CHEBI:57540"/>
    </ligand>
</feature>
<feature type="binding site" evidence="1">
    <location>
        <position position="407"/>
    </location>
    <ligand>
        <name>NAD(+)</name>
        <dbReference type="ChEBI" id="CHEBI:57540"/>
    </ligand>
</feature>
<feature type="binding site" evidence="1">
    <location>
        <position position="429"/>
    </location>
    <ligand>
        <name>NAD(+)</name>
        <dbReference type="ChEBI" id="CHEBI:57540"/>
    </ligand>
</feature>
<feature type="binding site" evidence="1">
    <location>
        <position position="453"/>
    </location>
    <ligand>
        <name>NAD(+)</name>
        <dbReference type="ChEBI" id="CHEBI:57540"/>
    </ligand>
</feature>
<feature type="binding site" evidence="1">
    <location>
        <position position="500"/>
    </location>
    <ligand>
        <name>substrate</name>
    </ligand>
</feature>
<feature type="binding site" evidence="1">
    <location>
        <position position="660"/>
    </location>
    <ligand>
        <name>substrate</name>
    </ligand>
</feature>
<feature type="site" description="Important for catalytic activity" evidence="1">
    <location>
        <position position="119"/>
    </location>
</feature>
<feature type="site" description="Important for catalytic activity" evidence="1">
    <location>
        <position position="139"/>
    </location>
</feature>
<dbReference type="EC" id="4.2.1.17" evidence="1"/>
<dbReference type="EC" id="5.1.2.3" evidence="1"/>
<dbReference type="EC" id="5.3.3.8" evidence="1"/>
<dbReference type="EC" id="1.1.1.35" evidence="1"/>
<dbReference type="EMBL" id="FM200053">
    <property type="protein sequence ID" value="CAR61840.1"/>
    <property type="molecule type" value="Genomic_DNA"/>
</dbReference>
<dbReference type="SMR" id="B5BIZ0"/>
<dbReference type="KEGG" id="sek:SSPA3560"/>
<dbReference type="HOGENOM" id="CLU_009834_16_3_6"/>
<dbReference type="UniPathway" id="UPA00659"/>
<dbReference type="Proteomes" id="UP000001869">
    <property type="component" value="Chromosome"/>
</dbReference>
<dbReference type="GO" id="GO:0036125">
    <property type="term" value="C:fatty acid beta-oxidation multienzyme complex"/>
    <property type="evidence" value="ECO:0007669"/>
    <property type="project" value="InterPro"/>
</dbReference>
<dbReference type="GO" id="GO:0008692">
    <property type="term" value="F:3-hydroxybutyryl-CoA epimerase activity"/>
    <property type="evidence" value="ECO:0007669"/>
    <property type="project" value="UniProtKB-UniRule"/>
</dbReference>
<dbReference type="GO" id="GO:0004165">
    <property type="term" value="F:delta(3)-delta(2)-enoyl-CoA isomerase activity"/>
    <property type="evidence" value="ECO:0007669"/>
    <property type="project" value="UniProtKB-UniRule"/>
</dbReference>
<dbReference type="GO" id="GO:0004300">
    <property type="term" value="F:enoyl-CoA hydratase activity"/>
    <property type="evidence" value="ECO:0007669"/>
    <property type="project" value="UniProtKB-UniRule"/>
</dbReference>
<dbReference type="GO" id="GO:0016509">
    <property type="term" value="F:long-chain-3-hydroxyacyl-CoA dehydrogenase activity"/>
    <property type="evidence" value="ECO:0007669"/>
    <property type="project" value="TreeGrafter"/>
</dbReference>
<dbReference type="GO" id="GO:0070403">
    <property type="term" value="F:NAD+ binding"/>
    <property type="evidence" value="ECO:0007669"/>
    <property type="project" value="InterPro"/>
</dbReference>
<dbReference type="GO" id="GO:0006635">
    <property type="term" value="P:fatty acid beta-oxidation"/>
    <property type="evidence" value="ECO:0007669"/>
    <property type="project" value="UniProtKB-UniRule"/>
</dbReference>
<dbReference type="CDD" id="cd06558">
    <property type="entry name" value="crotonase-like"/>
    <property type="match status" value="1"/>
</dbReference>
<dbReference type="FunFam" id="1.10.1040.50:FF:000001">
    <property type="entry name" value="Fatty acid oxidation complex subunit alpha"/>
    <property type="match status" value="1"/>
</dbReference>
<dbReference type="FunFam" id="3.90.226.10:FF:000018">
    <property type="entry name" value="Fatty acid oxidation complex subunit alpha"/>
    <property type="match status" value="1"/>
</dbReference>
<dbReference type="FunFam" id="3.40.50.720:FF:000009">
    <property type="entry name" value="Fatty oxidation complex, alpha subunit"/>
    <property type="match status" value="1"/>
</dbReference>
<dbReference type="Gene3D" id="1.10.1040.50">
    <property type="match status" value="1"/>
</dbReference>
<dbReference type="Gene3D" id="3.90.226.10">
    <property type="entry name" value="2-enoyl-CoA Hydratase, Chain A, domain 1"/>
    <property type="match status" value="1"/>
</dbReference>
<dbReference type="Gene3D" id="3.40.50.720">
    <property type="entry name" value="NAD(P)-binding Rossmann-like Domain"/>
    <property type="match status" value="1"/>
</dbReference>
<dbReference type="HAMAP" id="MF_01621">
    <property type="entry name" value="FadB"/>
    <property type="match status" value="1"/>
</dbReference>
<dbReference type="InterPro" id="IPR006180">
    <property type="entry name" value="3-OHacyl-CoA_DH_CS"/>
</dbReference>
<dbReference type="InterPro" id="IPR006176">
    <property type="entry name" value="3-OHacyl-CoA_DH_NAD-bd"/>
</dbReference>
<dbReference type="InterPro" id="IPR006108">
    <property type="entry name" value="3HC_DH_C"/>
</dbReference>
<dbReference type="InterPro" id="IPR008927">
    <property type="entry name" value="6-PGluconate_DH-like_C_sf"/>
</dbReference>
<dbReference type="InterPro" id="IPR029045">
    <property type="entry name" value="ClpP/crotonase-like_dom_sf"/>
</dbReference>
<dbReference type="InterPro" id="IPR018376">
    <property type="entry name" value="Enoyl-CoA_hyd/isom_CS"/>
</dbReference>
<dbReference type="InterPro" id="IPR001753">
    <property type="entry name" value="Enoyl-CoA_hydra/iso"/>
</dbReference>
<dbReference type="InterPro" id="IPR050136">
    <property type="entry name" value="FA_oxidation_alpha_subunit"/>
</dbReference>
<dbReference type="InterPro" id="IPR012799">
    <property type="entry name" value="FadB"/>
</dbReference>
<dbReference type="InterPro" id="IPR036291">
    <property type="entry name" value="NAD(P)-bd_dom_sf"/>
</dbReference>
<dbReference type="NCBIfam" id="TIGR02437">
    <property type="entry name" value="FadB"/>
    <property type="match status" value="1"/>
</dbReference>
<dbReference type="NCBIfam" id="NF008727">
    <property type="entry name" value="PRK11730.1"/>
    <property type="match status" value="1"/>
</dbReference>
<dbReference type="PANTHER" id="PTHR43612">
    <property type="entry name" value="TRIFUNCTIONAL ENZYME SUBUNIT ALPHA"/>
    <property type="match status" value="1"/>
</dbReference>
<dbReference type="PANTHER" id="PTHR43612:SF3">
    <property type="entry name" value="TRIFUNCTIONAL ENZYME SUBUNIT ALPHA, MITOCHONDRIAL"/>
    <property type="match status" value="1"/>
</dbReference>
<dbReference type="Pfam" id="PF00725">
    <property type="entry name" value="3HCDH"/>
    <property type="match status" value="2"/>
</dbReference>
<dbReference type="Pfam" id="PF02737">
    <property type="entry name" value="3HCDH_N"/>
    <property type="match status" value="1"/>
</dbReference>
<dbReference type="Pfam" id="PF00378">
    <property type="entry name" value="ECH_1"/>
    <property type="match status" value="1"/>
</dbReference>
<dbReference type="SUPFAM" id="SSF48179">
    <property type="entry name" value="6-phosphogluconate dehydrogenase C-terminal domain-like"/>
    <property type="match status" value="2"/>
</dbReference>
<dbReference type="SUPFAM" id="SSF52096">
    <property type="entry name" value="ClpP/crotonase"/>
    <property type="match status" value="1"/>
</dbReference>
<dbReference type="SUPFAM" id="SSF51735">
    <property type="entry name" value="NAD(P)-binding Rossmann-fold domains"/>
    <property type="match status" value="1"/>
</dbReference>
<dbReference type="PROSITE" id="PS00067">
    <property type="entry name" value="3HCDH"/>
    <property type="match status" value="1"/>
</dbReference>
<dbReference type="PROSITE" id="PS00166">
    <property type="entry name" value="ENOYL_COA_HYDRATASE"/>
    <property type="match status" value="1"/>
</dbReference>
<organism>
    <name type="scientific">Salmonella paratyphi A (strain AKU_12601)</name>
    <dbReference type="NCBI Taxonomy" id="554290"/>
    <lineage>
        <taxon>Bacteria</taxon>
        <taxon>Pseudomonadati</taxon>
        <taxon>Pseudomonadota</taxon>
        <taxon>Gammaproteobacteria</taxon>
        <taxon>Enterobacterales</taxon>
        <taxon>Enterobacteriaceae</taxon>
        <taxon>Salmonella</taxon>
    </lineage>
</organism>
<keyword id="KW-0276">Fatty acid metabolism</keyword>
<keyword id="KW-0413">Isomerase</keyword>
<keyword id="KW-0442">Lipid degradation</keyword>
<keyword id="KW-0443">Lipid metabolism</keyword>
<keyword id="KW-0456">Lyase</keyword>
<keyword id="KW-0511">Multifunctional enzyme</keyword>
<keyword id="KW-0520">NAD</keyword>
<keyword id="KW-0560">Oxidoreductase</keyword>
<reference key="1">
    <citation type="journal article" date="2009" name="BMC Genomics">
        <title>Pseudogene accumulation in the evolutionary histories of Salmonella enterica serovars Paratyphi A and Typhi.</title>
        <authorList>
            <person name="Holt K.E."/>
            <person name="Thomson N.R."/>
            <person name="Wain J."/>
            <person name="Langridge G.C."/>
            <person name="Hasan R."/>
            <person name="Bhutta Z.A."/>
            <person name="Quail M.A."/>
            <person name="Norbertczak H."/>
            <person name="Walker D."/>
            <person name="Simmonds M."/>
            <person name="White B."/>
            <person name="Bason N."/>
            <person name="Mungall K."/>
            <person name="Dougan G."/>
            <person name="Parkhill J."/>
        </authorList>
    </citation>
    <scope>NUCLEOTIDE SEQUENCE [LARGE SCALE GENOMIC DNA]</scope>
    <source>
        <strain>AKU_12601</strain>
    </source>
</reference>
<proteinExistence type="inferred from homology"/>
<gene>
    <name evidence="1" type="primary">fadB</name>
    <name type="ordered locus">SSPA3560</name>
</gene>
<sequence>MLYKGDTLYLDWLEDGIAELVFDAPGSVNKLDTATVASLGQALEVLEKQHDLKGLLLRSNKAAFIVGADITEFLSLFLVPEEQLSQWLHFANSVFNRLEDLPVPTLAAVNGYALGGGCECVLATDYRLATPDLRIGLPETKLGIMPGFGGSVRLPRMLGADSALEIIAAGKDVGAEHALKIGLVDGVVKQEKLIEGAIAVLRQAITGDLDWRAKRQPKLEPLKLSKIEAAMSFTIAKGMVAQTAGKHYPAPMTAVKTIEAAARFGREEALNLENKSFVPLAHTNEARALVGIFLNDQYVKGKAKKLTKDIETPKQAAVLGAGIMGGGIAYQSAWKGVPVIMKDINDKSLNLGMTEAAKLLNKQLERGKIDGLKLAGVISTIHPTLDYAGFDRVDVVVEAVVENPKVKKAVLAETEQKVRPETVLASNTSTIPIGELASALERPENFCGMHFFNPVHRMPLVEIIRGEKSSDETIAKVIAWASKMGKTPIVVNDCPGFFVNRVLFPYFAGFSQLLRDGADFRKVDKVMEKQFGWPMGPAYLLDVVGIDTAHHAQAVMAAGFPQRMQKEYRDAIDALFDANRFGQKNGLGFWRYKEDSKGKPKKEEDAAVDDLLASVSQPKRDFSDDEIIARMMIPMINEVVRCLEEGIIASPAEADMALVYGLGFPPFHGGAFRWLDTQGSAKYLDMAQQYQHLGPLYEVPEGLRNKARHNEPIIPRLNQPVRLVL</sequence>
<comment type="function">
    <text evidence="1">Involved in the aerobic and anaerobic degradation of long-chain fatty acids via beta-oxidation cycle. Catalyzes the formation of 3-oxoacyl-CoA from enoyl-CoA via L-3-hydroxyacyl-CoA. It can also use D-3-hydroxyacyl-CoA and cis-3-enoyl-CoA as substrate.</text>
</comment>
<comment type="catalytic activity">
    <reaction evidence="1">
        <text>a (3S)-3-hydroxyacyl-CoA + NAD(+) = a 3-oxoacyl-CoA + NADH + H(+)</text>
        <dbReference type="Rhea" id="RHEA:22432"/>
        <dbReference type="ChEBI" id="CHEBI:15378"/>
        <dbReference type="ChEBI" id="CHEBI:57318"/>
        <dbReference type="ChEBI" id="CHEBI:57540"/>
        <dbReference type="ChEBI" id="CHEBI:57945"/>
        <dbReference type="ChEBI" id="CHEBI:90726"/>
        <dbReference type="EC" id="1.1.1.35"/>
    </reaction>
</comment>
<comment type="catalytic activity">
    <reaction evidence="1">
        <text>a (3S)-3-hydroxyacyl-CoA = a (2E)-enoyl-CoA + H2O</text>
        <dbReference type="Rhea" id="RHEA:16105"/>
        <dbReference type="ChEBI" id="CHEBI:15377"/>
        <dbReference type="ChEBI" id="CHEBI:57318"/>
        <dbReference type="ChEBI" id="CHEBI:58856"/>
        <dbReference type="EC" id="4.2.1.17"/>
    </reaction>
</comment>
<comment type="catalytic activity">
    <reaction evidence="1">
        <text>a 4-saturated-(3S)-3-hydroxyacyl-CoA = a (3E)-enoyl-CoA + H2O</text>
        <dbReference type="Rhea" id="RHEA:20724"/>
        <dbReference type="ChEBI" id="CHEBI:15377"/>
        <dbReference type="ChEBI" id="CHEBI:58521"/>
        <dbReference type="ChEBI" id="CHEBI:137480"/>
        <dbReference type="EC" id="4.2.1.17"/>
    </reaction>
</comment>
<comment type="catalytic activity">
    <reaction evidence="1">
        <text>(3S)-3-hydroxybutanoyl-CoA = (3R)-3-hydroxybutanoyl-CoA</text>
        <dbReference type="Rhea" id="RHEA:21760"/>
        <dbReference type="ChEBI" id="CHEBI:57315"/>
        <dbReference type="ChEBI" id="CHEBI:57316"/>
        <dbReference type="EC" id="5.1.2.3"/>
    </reaction>
</comment>
<comment type="catalytic activity">
    <reaction evidence="1">
        <text>a (3Z)-enoyl-CoA = a 4-saturated (2E)-enoyl-CoA</text>
        <dbReference type="Rhea" id="RHEA:45900"/>
        <dbReference type="ChEBI" id="CHEBI:85097"/>
        <dbReference type="ChEBI" id="CHEBI:85489"/>
        <dbReference type="EC" id="5.3.3.8"/>
    </reaction>
</comment>
<comment type="catalytic activity">
    <reaction evidence="1">
        <text>a (3E)-enoyl-CoA = a 4-saturated (2E)-enoyl-CoA</text>
        <dbReference type="Rhea" id="RHEA:45228"/>
        <dbReference type="ChEBI" id="CHEBI:58521"/>
        <dbReference type="ChEBI" id="CHEBI:85097"/>
        <dbReference type="EC" id="5.3.3.8"/>
    </reaction>
</comment>
<comment type="pathway">
    <text evidence="1">Lipid metabolism; fatty acid beta-oxidation.</text>
</comment>
<comment type="subunit">
    <text evidence="1">Heterotetramer of two alpha chains (FadB) and two beta chains (FadA).</text>
</comment>
<comment type="similarity">
    <text evidence="1">In the N-terminal section; belongs to the enoyl-CoA hydratase/isomerase family.</text>
</comment>
<comment type="similarity">
    <text evidence="1">In the C-terminal section; belongs to the 3-hydroxyacyl-CoA dehydrogenase family.</text>
</comment>
<name>FADB_SALPK</name>
<accession>B5BIZ0</accession>
<evidence type="ECO:0000255" key="1">
    <source>
        <dbReference type="HAMAP-Rule" id="MF_01621"/>
    </source>
</evidence>
<protein>
    <recommendedName>
        <fullName evidence="1">Fatty acid oxidation complex subunit alpha</fullName>
    </recommendedName>
    <domain>
        <recommendedName>
            <fullName evidence="1">Enoyl-CoA hydratase/Delta(3)-cis-Delta(2)-trans-enoyl-CoA isomerase/3-hydroxybutyryl-CoA epimerase</fullName>
            <ecNumber evidence="1">4.2.1.17</ecNumber>
            <ecNumber evidence="1">5.1.2.3</ecNumber>
            <ecNumber evidence="1">5.3.3.8</ecNumber>
        </recommendedName>
    </domain>
    <domain>
        <recommendedName>
            <fullName evidence="1">3-hydroxyacyl-CoA dehydrogenase</fullName>
            <ecNumber evidence="1">1.1.1.35</ecNumber>
        </recommendedName>
    </domain>
</protein>